<comment type="function">
    <text evidence="4">A cytochrome P450 monooxygenase involved in muricholic acid (MCA) synthesis (PubMed:27638959). Hydroxylates at the 6-beta position two major bile acids, chenodeoxycholic acid (CDCA) and ursodeoxycholic acid (UDCA) to form alpha-MCA and beta-MCA, respectively (PubMed:27638959). May regulate NR1H4/farnesoid X receptor signaling, as taurine-conjugated MCAs are antagonists of NR1H4. Mechanistically, uses molecular oxygen inserting one oxygen atom into a substrate, and reducing the second into a water molecule, with two electrons provided by NADPH via cytochrome P450 reductase (CPR; NADPH-ferrihemoprotein reductase) (PubMed:27638959).</text>
</comment>
<comment type="catalytic activity">
    <reaction evidence="4">
        <text>chenodeoxycholate + reduced [NADPH--hemoprotein reductase] + O2 = alpha-muricholate + oxidized [NADPH--hemoprotein reductase] + H2O + H(+)</text>
        <dbReference type="Rhea" id="RHEA:51448"/>
        <dbReference type="Rhea" id="RHEA-COMP:11964"/>
        <dbReference type="Rhea" id="RHEA-COMP:11965"/>
        <dbReference type="ChEBI" id="CHEBI:15377"/>
        <dbReference type="ChEBI" id="CHEBI:15378"/>
        <dbReference type="ChEBI" id="CHEBI:15379"/>
        <dbReference type="ChEBI" id="CHEBI:36234"/>
        <dbReference type="ChEBI" id="CHEBI:57618"/>
        <dbReference type="ChEBI" id="CHEBI:58210"/>
        <dbReference type="ChEBI" id="CHEBI:134116"/>
    </reaction>
    <physiologicalReaction direction="left-to-right" evidence="7">
        <dbReference type="Rhea" id="RHEA:51449"/>
    </physiologicalReaction>
</comment>
<comment type="catalytic activity">
    <reaction evidence="4">
        <text>ursodeoxycholate + reduced [NADPH--hemoprotein reductase] + O2 = beta-muricholate + oxidized [NADPH--hemoprotein reductase] + H2O + H(+)</text>
        <dbReference type="Rhea" id="RHEA:51452"/>
        <dbReference type="Rhea" id="RHEA-COMP:11964"/>
        <dbReference type="Rhea" id="RHEA-COMP:11965"/>
        <dbReference type="ChEBI" id="CHEBI:15377"/>
        <dbReference type="ChEBI" id="CHEBI:15378"/>
        <dbReference type="ChEBI" id="CHEBI:15379"/>
        <dbReference type="ChEBI" id="CHEBI:57618"/>
        <dbReference type="ChEBI" id="CHEBI:58210"/>
        <dbReference type="ChEBI" id="CHEBI:78604"/>
        <dbReference type="ChEBI" id="CHEBI:134119"/>
    </reaction>
    <physiologicalReaction direction="left-to-right" evidence="7">
        <dbReference type="Rhea" id="RHEA:51453"/>
    </physiologicalReaction>
</comment>
<comment type="cofactor">
    <cofactor evidence="2">
        <name>heme</name>
        <dbReference type="ChEBI" id="CHEBI:30413"/>
    </cofactor>
</comment>
<comment type="subcellular location">
    <subcellularLocation>
        <location>Endoplasmic reticulum membrane</location>
        <topology>Peripheral membrane protein</topology>
    </subcellularLocation>
    <subcellularLocation>
        <location>Microsome membrane</location>
        <topology>Peripheral membrane protein</topology>
    </subcellularLocation>
</comment>
<comment type="tissue specificity">
    <text evidence="4">Expressed in liver.</text>
</comment>
<comment type="similarity">
    <text evidence="3">Belongs to the cytochrome P450 family.</text>
</comment>
<comment type="sequence caution" evidence="6">
    <conflict type="erroneous initiation">
        <sequence resource="EMBL-CDS" id="AAH25822"/>
    </conflict>
</comment>
<sequence length="489" mass="56020">MALFIFLGIWLSCFLFLFLWNQHRGRGKLPPGPTPLPIVGNILQVDVKNISKSMGMLAKKYGPVFTVYLGMKPTVVLHGYKAMKEALIDQGDEFSDKTDSSLLSRTSQGLGIVFSNGETWKQTRRFSLMVLRSMGMGKKTIEDRIQEEILYMLDALRKTNGSPCDPSFLLACVPCNVISTVIFQHRFDYNDQTFQDFMENFHRKIEILASPWSQLCSAYPILYYLPGIHNRFLKDVTQQKKFILEEINRHQKSLDLSNPQDFIDYFLIKMEKEKHNQKSEFTMDNLVVSIGDLFGAGTETTSSTVKYGLLLLLKYPEVTAKIQEEIAHVIGRHRRPTMQDRNHMPYTDAVLHEIQRYIDFVPIPSPRKTTQDVEFRGYHIPKGTSVMACLTSVLNDDKEFPNPEKFDPGHFLDEKGNFKKSDYFVAFSAGRRACIGEGLARMEMFLILTNILQHFTLKPLVKPEDIDTKPVQTGLLHVPPPFELCFIPV</sequence>
<organism>
    <name type="scientific">Mus musculus</name>
    <name type="common">Mouse</name>
    <dbReference type="NCBI Taxonomy" id="10090"/>
    <lineage>
        <taxon>Eukaryota</taxon>
        <taxon>Metazoa</taxon>
        <taxon>Chordata</taxon>
        <taxon>Craniata</taxon>
        <taxon>Vertebrata</taxon>
        <taxon>Euteleostomi</taxon>
        <taxon>Mammalia</taxon>
        <taxon>Eutheria</taxon>
        <taxon>Euarchontoglires</taxon>
        <taxon>Glires</taxon>
        <taxon>Rodentia</taxon>
        <taxon>Myomorpha</taxon>
        <taxon>Muroidea</taxon>
        <taxon>Muridae</taxon>
        <taxon>Murinae</taxon>
        <taxon>Mus</taxon>
        <taxon>Mus</taxon>
    </lineage>
</organism>
<reference key="1">
    <citation type="submission" date="2003-01" db="EMBL/GenBank/DDBJ databases">
        <title>Molecular cloning, expression, and characterization of four novel mouse cytochrome P450 (CYP) genes (CYP2C65, CYP2C66, CYP2C53 and CYP2C70).</title>
        <authorList>
            <person name="Zhao Y."/>
            <person name="Wang H."/>
            <person name="Goldstein J.A."/>
            <person name="Zeldin D.C."/>
        </authorList>
    </citation>
    <scope>NUCLEOTIDE SEQUENCE [MRNA]</scope>
    <source>
        <strain>BALB/cJ</strain>
    </source>
</reference>
<reference key="2">
    <citation type="journal article" date="2004" name="Genome Res.">
        <title>The status, quality, and expansion of the NIH full-length cDNA project: the Mammalian Gene Collection (MGC).</title>
        <authorList>
            <consortium name="The MGC Project Team"/>
        </authorList>
    </citation>
    <scope>NUCLEOTIDE SEQUENCE [LARGE SCALE MRNA]</scope>
    <source>
        <strain>FVB/N</strain>
        <tissue>Liver</tissue>
    </source>
</reference>
<reference key="3">
    <citation type="journal article" date="2010" name="Cell">
        <title>A tissue-specific atlas of mouse protein phosphorylation and expression.</title>
        <authorList>
            <person name="Huttlin E.L."/>
            <person name="Jedrychowski M.P."/>
            <person name="Elias J.E."/>
            <person name="Goswami T."/>
            <person name="Rad R."/>
            <person name="Beausoleil S.A."/>
            <person name="Villen J."/>
            <person name="Haas W."/>
            <person name="Sowa M.E."/>
            <person name="Gygi S.P."/>
        </authorList>
    </citation>
    <scope>IDENTIFICATION BY MASS SPECTROMETRY [LARGE SCALE ANALYSIS]</scope>
    <source>
        <tissue>Liver</tissue>
    </source>
</reference>
<reference key="4">
    <citation type="journal article" date="2016" name="J. Lipid Res.">
        <title>Cyp2c70 is responsible for the species difference in bile acid metabolism between mice and humans.</title>
        <authorList>
            <person name="Takahashi S."/>
            <person name="Fukami T."/>
            <person name="Masuo Y."/>
            <person name="Brocker C.N."/>
            <person name="Xie C."/>
            <person name="Krausz K.W."/>
            <person name="Wolf C.R."/>
            <person name="Henderson C.J."/>
            <person name="Gonzalez F.J."/>
        </authorList>
    </citation>
    <scope>FUNCTION</scope>
    <scope>CATALYTIC ACTIVITY</scope>
    <scope>TISSUE SPECIFICITY</scope>
</reference>
<name>CP270_MOUSE</name>
<protein>
    <recommendedName>
        <fullName>Cytochrome P450 2C70</fullName>
        <ecNumber evidence="4">1.14.14.-</ecNumber>
    </recommendedName>
    <alternativeName>
        <fullName>CYPIIC70</fullName>
    </alternativeName>
</protein>
<dbReference type="EC" id="1.14.14.-" evidence="4"/>
<dbReference type="EMBL" id="AY227736">
    <property type="protein sequence ID" value="AAP55509.1"/>
    <property type="molecule type" value="mRNA"/>
</dbReference>
<dbReference type="EMBL" id="BC016494">
    <property type="protein sequence ID" value="AAH16494.1"/>
    <property type="molecule type" value="mRNA"/>
</dbReference>
<dbReference type="EMBL" id="BC022151">
    <property type="protein sequence ID" value="AAH22151.1"/>
    <property type="molecule type" value="mRNA"/>
</dbReference>
<dbReference type="EMBL" id="BC023894">
    <property type="protein sequence ID" value="AAH23894.2"/>
    <property type="molecule type" value="mRNA"/>
</dbReference>
<dbReference type="EMBL" id="BC025822">
    <property type="protein sequence ID" value="AAH25822.1"/>
    <property type="status" value="ALT_INIT"/>
    <property type="molecule type" value="mRNA"/>
</dbReference>
<dbReference type="EMBL" id="BC034831">
    <property type="protein sequence ID" value="AAH34831.1"/>
    <property type="molecule type" value="mRNA"/>
</dbReference>
<dbReference type="CCDS" id="CCDS37976.1"/>
<dbReference type="RefSeq" id="NP_663474.2">
    <property type="nucleotide sequence ID" value="NM_145499.2"/>
</dbReference>
<dbReference type="SMR" id="Q91W64"/>
<dbReference type="FunCoup" id="Q91W64">
    <property type="interactions" value="355"/>
</dbReference>
<dbReference type="STRING" id="10090.ENSMUSP00000060584"/>
<dbReference type="SwissLipids" id="SLP:000001666"/>
<dbReference type="GlyGen" id="Q91W64">
    <property type="glycosylation" value="1 site"/>
</dbReference>
<dbReference type="iPTMnet" id="Q91W64"/>
<dbReference type="PhosphoSitePlus" id="Q91W64"/>
<dbReference type="SwissPalm" id="Q91W64"/>
<dbReference type="jPOST" id="Q91W64"/>
<dbReference type="PaxDb" id="10090-ENSMUSP00000060584"/>
<dbReference type="PeptideAtlas" id="Q91W64"/>
<dbReference type="ProteomicsDB" id="285258"/>
<dbReference type="DNASU" id="226105"/>
<dbReference type="Ensembl" id="ENSMUST00000051846.13">
    <property type="protein sequence ID" value="ENSMUSP00000060584.7"/>
    <property type="gene ID" value="ENSMUSG00000060613.11"/>
</dbReference>
<dbReference type="GeneID" id="226105"/>
<dbReference type="KEGG" id="mmu:226105"/>
<dbReference type="UCSC" id="uc008hkj.2">
    <property type="organism name" value="mouse"/>
</dbReference>
<dbReference type="AGR" id="MGI:2385878"/>
<dbReference type="CTD" id="226105"/>
<dbReference type="MGI" id="MGI:2385878">
    <property type="gene designation" value="Cyp2c70"/>
</dbReference>
<dbReference type="VEuPathDB" id="HostDB:ENSMUSG00000060613"/>
<dbReference type="eggNOG" id="KOG0156">
    <property type="taxonomic scope" value="Eukaryota"/>
</dbReference>
<dbReference type="GeneTree" id="ENSGT00940000162654"/>
<dbReference type="HOGENOM" id="CLU_001570_22_3_1"/>
<dbReference type="InParanoid" id="Q91W64"/>
<dbReference type="OMA" id="QHWLKFK"/>
<dbReference type="OrthoDB" id="1103324at2759"/>
<dbReference type="PhylomeDB" id="Q91W64"/>
<dbReference type="TreeFam" id="TF352043"/>
<dbReference type="BioGRID-ORCS" id="226105">
    <property type="hits" value="5 hits in 75 CRISPR screens"/>
</dbReference>
<dbReference type="ChiTaRS" id="Cyp2c70">
    <property type="organism name" value="mouse"/>
</dbReference>
<dbReference type="PRO" id="PR:Q91W64"/>
<dbReference type="Proteomes" id="UP000000589">
    <property type="component" value="Chromosome 19"/>
</dbReference>
<dbReference type="RNAct" id="Q91W64">
    <property type="molecule type" value="protein"/>
</dbReference>
<dbReference type="Bgee" id="ENSMUSG00000060613">
    <property type="expression patterns" value="Expressed in left lobe of liver and 50 other cell types or tissues"/>
</dbReference>
<dbReference type="ExpressionAtlas" id="Q91W64">
    <property type="expression patterns" value="baseline and differential"/>
</dbReference>
<dbReference type="GO" id="GO:0005789">
    <property type="term" value="C:endoplasmic reticulum membrane"/>
    <property type="evidence" value="ECO:0007669"/>
    <property type="project" value="UniProtKB-SubCell"/>
</dbReference>
<dbReference type="GO" id="GO:0020037">
    <property type="term" value="F:heme binding"/>
    <property type="evidence" value="ECO:0007669"/>
    <property type="project" value="InterPro"/>
</dbReference>
<dbReference type="GO" id="GO:0005506">
    <property type="term" value="F:iron ion binding"/>
    <property type="evidence" value="ECO:0007669"/>
    <property type="project" value="InterPro"/>
</dbReference>
<dbReference type="GO" id="GO:0004497">
    <property type="term" value="F:monooxygenase activity"/>
    <property type="evidence" value="ECO:0007669"/>
    <property type="project" value="UniProtKB-KW"/>
</dbReference>
<dbReference type="GO" id="GO:0016705">
    <property type="term" value="F:oxidoreductase activity, acting on paired donors, with incorporation or reduction of molecular oxygen"/>
    <property type="evidence" value="ECO:0007669"/>
    <property type="project" value="InterPro"/>
</dbReference>
<dbReference type="CDD" id="cd20665">
    <property type="entry name" value="CYP2C-like"/>
    <property type="match status" value="1"/>
</dbReference>
<dbReference type="FunFam" id="1.10.630.10:FF:000001">
    <property type="entry name" value="Cytochrome P450, family 2"/>
    <property type="match status" value="1"/>
</dbReference>
<dbReference type="Gene3D" id="1.10.630.10">
    <property type="entry name" value="Cytochrome P450"/>
    <property type="match status" value="1"/>
</dbReference>
<dbReference type="InterPro" id="IPR001128">
    <property type="entry name" value="Cyt_P450"/>
</dbReference>
<dbReference type="InterPro" id="IPR017972">
    <property type="entry name" value="Cyt_P450_CS"/>
</dbReference>
<dbReference type="InterPro" id="IPR002401">
    <property type="entry name" value="Cyt_P450_E_grp-I"/>
</dbReference>
<dbReference type="InterPro" id="IPR036396">
    <property type="entry name" value="Cyt_P450_sf"/>
</dbReference>
<dbReference type="InterPro" id="IPR050182">
    <property type="entry name" value="Cytochrome_P450_fam2"/>
</dbReference>
<dbReference type="PANTHER" id="PTHR24300:SF200">
    <property type="entry name" value="CYTOCHROME P450 2C70"/>
    <property type="match status" value="1"/>
</dbReference>
<dbReference type="PANTHER" id="PTHR24300">
    <property type="entry name" value="CYTOCHROME P450 508A4-RELATED"/>
    <property type="match status" value="1"/>
</dbReference>
<dbReference type="Pfam" id="PF00067">
    <property type="entry name" value="p450"/>
    <property type="match status" value="1"/>
</dbReference>
<dbReference type="PRINTS" id="PR00463">
    <property type="entry name" value="EP450I"/>
</dbReference>
<dbReference type="PRINTS" id="PR00385">
    <property type="entry name" value="P450"/>
</dbReference>
<dbReference type="SUPFAM" id="SSF48264">
    <property type="entry name" value="Cytochrome P450"/>
    <property type="match status" value="1"/>
</dbReference>
<dbReference type="PROSITE" id="PS00086">
    <property type="entry name" value="CYTOCHROME_P450"/>
    <property type="match status" value="1"/>
</dbReference>
<feature type="signal peptide" evidence="3">
    <location>
        <begin position="1"/>
        <end position="27"/>
    </location>
</feature>
<feature type="chain" id="PRO_0000051726" description="Cytochrome P450 2C70" evidence="3">
    <location>
        <begin position="28"/>
        <end position="489"/>
    </location>
</feature>
<feature type="binding site" description="axial binding residue" evidence="2">
    <location>
        <position position="434"/>
    </location>
    <ligand>
        <name>heme</name>
        <dbReference type="ChEBI" id="CHEBI:30413"/>
    </ligand>
    <ligandPart>
        <name>Fe</name>
        <dbReference type="ChEBI" id="CHEBI:18248"/>
    </ligandPart>
</feature>
<feature type="sequence conflict" description="In Ref. 1; AAP55509 and 2; AAH16494." evidence="6" ref="1 2">
    <original>D</original>
    <variation>Y</variation>
    <location>
        <position position="46"/>
    </location>
</feature>
<feature type="sequence conflict" description="In Ref. 1; AAP55509." evidence="6" ref="1">
    <original>V</original>
    <variation>A</variation>
    <location>
        <position position="130"/>
    </location>
</feature>
<keyword id="KW-0256">Endoplasmic reticulum</keyword>
<keyword id="KW-0349">Heme</keyword>
<keyword id="KW-0408">Iron</keyword>
<keyword id="KW-0472">Membrane</keyword>
<keyword id="KW-0479">Metal-binding</keyword>
<keyword id="KW-0492">Microsome</keyword>
<keyword id="KW-0503">Monooxygenase</keyword>
<keyword id="KW-0560">Oxidoreductase</keyword>
<keyword id="KW-1185">Reference proteome</keyword>
<keyword id="KW-0732">Signal</keyword>
<gene>
    <name evidence="5 8" type="primary">Cyp2c70</name>
    <name evidence="1" type="synonym">Cyp2c-70</name>
    <name evidence="1" type="synonym">Cyp2c22</name>
</gene>
<accession>Q91W64</accession>
<accession>Q5GLY9</accession>
<accession>Q80VW0</accession>
<accession>Q8R120</accession>
<accession>Q8VC00</accession>
<evidence type="ECO:0000250" key="1">
    <source>
        <dbReference type="UniProtKB" id="P19225"/>
    </source>
</evidence>
<evidence type="ECO:0000250" key="2">
    <source>
        <dbReference type="UniProtKB" id="P33261"/>
    </source>
</evidence>
<evidence type="ECO:0000255" key="3"/>
<evidence type="ECO:0000269" key="4">
    <source>
    </source>
</evidence>
<evidence type="ECO:0000303" key="5">
    <source>
    </source>
</evidence>
<evidence type="ECO:0000305" key="6"/>
<evidence type="ECO:0000305" key="7">
    <source>
    </source>
</evidence>
<evidence type="ECO:0000312" key="8">
    <source>
        <dbReference type="MGI" id="MGI:2385878"/>
    </source>
</evidence>
<proteinExistence type="evidence at protein level"/>